<dbReference type="EMBL" id="CP000750">
    <property type="protein sequence ID" value="ABS02192.1"/>
    <property type="molecule type" value="Genomic_DNA"/>
</dbReference>
<dbReference type="RefSeq" id="WP_012084965.1">
    <property type="nucleotide sequence ID" value="NC_009664.2"/>
</dbReference>
<dbReference type="SMR" id="A6W5V3"/>
<dbReference type="STRING" id="266940.Krad_0703"/>
<dbReference type="KEGG" id="kra:Krad_0703"/>
<dbReference type="eggNOG" id="COG0097">
    <property type="taxonomic scope" value="Bacteria"/>
</dbReference>
<dbReference type="HOGENOM" id="CLU_065464_1_2_11"/>
<dbReference type="OrthoDB" id="9805007at2"/>
<dbReference type="Proteomes" id="UP000001116">
    <property type="component" value="Chromosome"/>
</dbReference>
<dbReference type="GO" id="GO:0022625">
    <property type="term" value="C:cytosolic large ribosomal subunit"/>
    <property type="evidence" value="ECO:0007669"/>
    <property type="project" value="TreeGrafter"/>
</dbReference>
<dbReference type="GO" id="GO:0019843">
    <property type="term" value="F:rRNA binding"/>
    <property type="evidence" value="ECO:0007669"/>
    <property type="project" value="UniProtKB-UniRule"/>
</dbReference>
<dbReference type="GO" id="GO:0003735">
    <property type="term" value="F:structural constituent of ribosome"/>
    <property type="evidence" value="ECO:0007669"/>
    <property type="project" value="InterPro"/>
</dbReference>
<dbReference type="GO" id="GO:0002181">
    <property type="term" value="P:cytoplasmic translation"/>
    <property type="evidence" value="ECO:0007669"/>
    <property type="project" value="TreeGrafter"/>
</dbReference>
<dbReference type="FunFam" id="3.90.930.12:FF:000001">
    <property type="entry name" value="50S ribosomal protein L6"/>
    <property type="match status" value="1"/>
</dbReference>
<dbReference type="FunFam" id="3.90.930.12:FF:000002">
    <property type="entry name" value="50S ribosomal protein L6"/>
    <property type="match status" value="1"/>
</dbReference>
<dbReference type="Gene3D" id="3.90.930.12">
    <property type="entry name" value="Ribosomal protein L6, alpha-beta domain"/>
    <property type="match status" value="2"/>
</dbReference>
<dbReference type="HAMAP" id="MF_01365_B">
    <property type="entry name" value="Ribosomal_uL6_B"/>
    <property type="match status" value="1"/>
</dbReference>
<dbReference type="InterPro" id="IPR000702">
    <property type="entry name" value="Ribosomal_uL6-like"/>
</dbReference>
<dbReference type="InterPro" id="IPR036789">
    <property type="entry name" value="Ribosomal_uL6-like_a/b-dom_sf"/>
</dbReference>
<dbReference type="InterPro" id="IPR020040">
    <property type="entry name" value="Ribosomal_uL6_a/b-dom"/>
</dbReference>
<dbReference type="InterPro" id="IPR019906">
    <property type="entry name" value="Ribosomal_uL6_bac-type"/>
</dbReference>
<dbReference type="InterPro" id="IPR002358">
    <property type="entry name" value="Ribosomal_uL6_CS"/>
</dbReference>
<dbReference type="NCBIfam" id="TIGR03654">
    <property type="entry name" value="L6_bact"/>
    <property type="match status" value="1"/>
</dbReference>
<dbReference type="PANTHER" id="PTHR11655">
    <property type="entry name" value="60S/50S RIBOSOMAL PROTEIN L6/L9"/>
    <property type="match status" value="1"/>
</dbReference>
<dbReference type="PANTHER" id="PTHR11655:SF14">
    <property type="entry name" value="LARGE RIBOSOMAL SUBUNIT PROTEIN UL6M"/>
    <property type="match status" value="1"/>
</dbReference>
<dbReference type="Pfam" id="PF00347">
    <property type="entry name" value="Ribosomal_L6"/>
    <property type="match status" value="2"/>
</dbReference>
<dbReference type="PIRSF" id="PIRSF002162">
    <property type="entry name" value="Ribosomal_L6"/>
    <property type="match status" value="1"/>
</dbReference>
<dbReference type="PRINTS" id="PR00059">
    <property type="entry name" value="RIBOSOMALL6"/>
</dbReference>
<dbReference type="SUPFAM" id="SSF56053">
    <property type="entry name" value="Ribosomal protein L6"/>
    <property type="match status" value="2"/>
</dbReference>
<dbReference type="PROSITE" id="PS00525">
    <property type="entry name" value="RIBOSOMAL_L6_1"/>
    <property type="match status" value="1"/>
</dbReference>
<sequence length="179" mass="19174">MSRIGRLPITVPAGVDVTIDGAAVTVKGPKGELSHTVAAPISVERTEDGTLQVTRPDDERVSRSLHGLTRTLISNMVEGVTKGYEKKLEIVGTGYRVTPKGSDLEFALGFSHPVVVKAPAGITFAVENNTRFSVAGIDKQQVGEIAANIRKLRKPDPYKGKGVRYAGEQIRRKVGKAGK</sequence>
<organism>
    <name type="scientific">Kineococcus radiotolerans (strain ATCC BAA-149 / DSM 14245 / SRS30216)</name>
    <dbReference type="NCBI Taxonomy" id="266940"/>
    <lineage>
        <taxon>Bacteria</taxon>
        <taxon>Bacillati</taxon>
        <taxon>Actinomycetota</taxon>
        <taxon>Actinomycetes</taxon>
        <taxon>Kineosporiales</taxon>
        <taxon>Kineosporiaceae</taxon>
        <taxon>Kineococcus</taxon>
    </lineage>
</organism>
<accession>A6W5V3</accession>
<reference key="1">
    <citation type="journal article" date="2008" name="PLoS ONE">
        <title>Survival in nuclear waste, extreme resistance, and potential applications gleaned from the genome sequence of Kineococcus radiotolerans SRS30216.</title>
        <authorList>
            <person name="Bagwell C.E."/>
            <person name="Bhat S."/>
            <person name="Hawkins G.M."/>
            <person name="Smith B.W."/>
            <person name="Biswas T."/>
            <person name="Hoover T.R."/>
            <person name="Saunders E."/>
            <person name="Han C.S."/>
            <person name="Tsodikov O.V."/>
            <person name="Shimkets L.J."/>
        </authorList>
    </citation>
    <scope>NUCLEOTIDE SEQUENCE [LARGE SCALE GENOMIC DNA]</scope>
    <source>
        <strain>ATCC BAA-149 / DSM 14245 / SRS30216</strain>
    </source>
</reference>
<gene>
    <name evidence="1" type="primary">rplF</name>
    <name type="ordered locus">Krad_0703</name>
</gene>
<keyword id="KW-1185">Reference proteome</keyword>
<keyword id="KW-0687">Ribonucleoprotein</keyword>
<keyword id="KW-0689">Ribosomal protein</keyword>
<keyword id="KW-0694">RNA-binding</keyword>
<keyword id="KW-0699">rRNA-binding</keyword>
<protein>
    <recommendedName>
        <fullName evidence="1">Large ribosomal subunit protein uL6</fullName>
    </recommendedName>
    <alternativeName>
        <fullName evidence="2">50S ribosomal protein L6</fullName>
    </alternativeName>
</protein>
<comment type="function">
    <text evidence="1">This protein binds to the 23S rRNA, and is important in its secondary structure. It is located near the subunit interface in the base of the L7/L12 stalk, and near the tRNA binding site of the peptidyltransferase center.</text>
</comment>
<comment type="subunit">
    <text evidence="1">Part of the 50S ribosomal subunit.</text>
</comment>
<comment type="similarity">
    <text evidence="1">Belongs to the universal ribosomal protein uL6 family.</text>
</comment>
<evidence type="ECO:0000255" key="1">
    <source>
        <dbReference type="HAMAP-Rule" id="MF_01365"/>
    </source>
</evidence>
<evidence type="ECO:0000305" key="2"/>
<proteinExistence type="inferred from homology"/>
<name>RL6_KINRD</name>
<feature type="chain" id="PRO_1000087048" description="Large ribosomal subunit protein uL6">
    <location>
        <begin position="1"/>
        <end position="179"/>
    </location>
</feature>